<comment type="function">
    <text evidence="1">Peptide chain release factor 2 directs the termination of translation in response to the peptide chain termination codons UGA and UAA.</text>
</comment>
<comment type="subcellular location">
    <subcellularLocation>
        <location evidence="1">Cytoplasm</location>
    </subcellularLocation>
</comment>
<comment type="PTM">
    <text evidence="1">Methylated by PrmC. Methylation increases the termination efficiency of RF2.</text>
</comment>
<comment type="similarity">
    <text evidence="1">Belongs to the prokaryotic/mitochondrial release factor family.</text>
</comment>
<dbReference type="EMBL" id="FM180568">
    <property type="protein sequence ID" value="CAS10692.1"/>
    <property type="molecule type" value="Genomic_DNA"/>
</dbReference>
<dbReference type="RefSeq" id="WP_001701073.1">
    <property type="nucleotide sequence ID" value="NC_011601.1"/>
</dbReference>
<dbReference type="SMR" id="B7UHU0"/>
<dbReference type="GeneID" id="93779111"/>
<dbReference type="KEGG" id="ecg:E2348C_3144"/>
<dbReference type="HOGENOM" id="CLU_220733_1_0_6"/>
<dbReference type="Proteomes" id="UP000008205">
    <property type="component" value="Chromosome"/>
</dbReference>
<dbReference type="GO" id="GO:0005737">
    <property type="term" value="C:cytoplasm"/>
    <property type="evidence" value="ECO:0007669"/>
    <property type="project" value="UniProtKB-SubCell"/>
</dbReference>
<dbReference type="GO" id="GO:0016149">
    <property type="term" value="F:translation release factor activity, codon specific"/>
    <property type="evidence" value="ECO:0007669"/>
    <property type="project" value="UniProtKB-UniRule"/>
</dbReference>
<dbReference type="FunFam" id="1.20.58.410:FF:000001">
    <property type="entry name" value="Peptide chain release factor 2"/>
    <property type="match status" value="1"/>
</dbReference>
<dbReference type="FunFam" id="3.30.160.20:FF:000010">
    <property type="entry name" value="Peptide chain release factor 2"/>
    <property type="match status" value="1"/>
</dbReference>
<dbReference type="Gene3D" id="3.30.160.20">
    <property type="match status" value="1"/>
</dbReference>
<dbReference type="Gene3D" id="3.30.70.1660">
    <property type="match status" value="1"/>
</dbReference>
<dbReference type="Gene3D" id="1.20.58.410">
    <property type="entry name" value="Release factor"/>
    <property type="match status" value="1"/>
</dbReference>
<dbReference type="HAMAP" id="MF_00094">
    <property type="entry name" value="Rel_fac_2"/>
    <property type="match status" value="1"/>
</dbReference>
<dbReference type="InterPro" id="IPR005139">
    <property type="entry name" value="PCRF"/>
</dbReference>
<dbReference type="InterPro" id="IPR000352">
    <property type="entry name" value="Pep_chain_release_fac_I"/>
</dbReference>
<dbReference type="InterPro" id="IPR045853">
    <property type="entry name" value="Pep_chain_release_fac_I_sf"/>
</dbReference>
<dbReference type="InterPro" id="IPR004374">
    <property type="entry name" value="PrfB"/>
</dbReference>
<dbReference type="NCBIfam" id="TIGR00020">
    <property type="entry name" value="prfB"/>
    <property type="match status" value="1"/>
</dbReference>
<dbReference type="PANTHER" id="PTHR43116:SF3">
    <property type="entry name" value="CLASS I PEPTIDE CHAIN RELEASE FACTOR"/>
    <property type="match status" value="1"/>
</dbReference>
<dbReference type="PANTHER" id="PTHR43116">
    <property type="entry name" value="PEPTIDE CHAIN RELEASE FACTOR 2"/>
    <property type="match status" value="1"/>
</dbReference>
<dbReference type="Pfam" id="PF03462">
    <property type="entry name" value="PCRF"/>
    <property type="match status" value="1"/>
</dbReference>
<dbReference type="Pfam" id="PF00472">
    <property type="entry name" value="RF-1"/>
    <property type="match status" value="1"/>
</dbReference>
<dbReference type="SMART" id="SM00937">
    <property type="entry name" value="PCRF"/>
    <property type="match status" value="1"/>
</dbReference>
<dbReference type="SUPFAM" id="SSF75620">
    <property type="entry name" value="Release factor"/>
    <property type="match status" value="1"/>
</dbReference>
<dbReference type="PROSITE" id="PS00745">
    <property type="entry name" value="RF_PROK_I"/>
    <property type="match status" value="1"/>
</dbReference>
<organism>
    <name type="scientific">Escherichia coli O127:H6 (strain E2348/69 / EPEC)</name>
    <dbReference type="NCBI Taxonomy" id="574521"/>
    <lineage>
        <taxon>Bacteria</taxon>
        <taxon>Pseudomonadati</taxon>
        <taxon>Pseudomonadota</taxon>
        <taxon>Gammaproteobacteria</taxon>
        <taxon>Enterobacterales</taxon>
        <taxon>Enterobacteriaceae</taxon>
        <taxon>Escherichia</taxon>
    </lineage>
</organism>
<evidence type="ECO:0000255" key="1">
    <source>
        <dbReference type="HAMAP-Rule" id="MF_00094"/>
    </source>
</evidence>
<accession>B7UHU0</accession>
<protein>
    <recommendedName>
        <fullName evidence="1">Peptide chain release factor 2</fullName>
        <shortName evidence="1">RF-2</shortName>
    </recommendedName>
</protein>
<feature type="chain" id="PRO_1000193553" description="Peptide chain release factor 2">
    <location>
        <begin position="1"/>
        <end position="365"/>
    </location>
</feature>
<feature type="modified residue" description="N5-methylglutamine" evidence="1">
    <location>
        <position position="252"/>
    </location>
</feature>
<gene>
    <name evidence="1" type="primary">prfB</name>
    <name type="ordered locus">E2348C_3144</name>
</gene>
<reference key="1">
    <citation type="journal article" date="2009" name="J. Bacteriol.">
        <title>Complete genome sequence and comparative genome analysis of enteropathogenic Escherichia coli O127:H6 strain E2348/69.</title>
        <authorList>
            <person name="Iguchi A."/>
            <person name="Thomson N.R."/>
            <person name="Ogura Y."/>
            <person name="Saunders D."/>
            <person name="Ooka T."/>
            <person name="Henderson I.R."/>
            <person name="Harris D."/>
            <person name="Asadulghani M."/>
            <person name="Kurokawa K."/>
            <person name="Dean P."/>
            <person name="Kenny B."/>
            <person name="Quail M.A."/>
            <person name="Thurston S."/>
            <person name="Dougan G."/>
            <person name="Hayashi T."/>
            <person name="Parkhill J."/>
            <person name="Frankel G."/>
        </authorList>
    </citation>
    <scope>NUCLEOTIDE SEQUENCE [LARGE SCALE GENOMIC DNA]</scope>
    <source>
        <strain>E2348/69 / EPEC</strain>
    </source>
</reference>
<sequence>MFEINPVNNRIQDLTERSDVLRGYLDYDAKKERLEEVNAELEQPDVWNEPERAQALGKERSSLEAVVDTLDQMKQGLEDVSGLLELAVEADDEETFNEAVAELDALEEKLAQLEFRRMFSGEYDSADCYLDIQAGSGGTEAQDWASMLERMYLRWAESRGFKTEIIEESEGEVAGIKSVTIKISGDYAYGWLRTETGVHRLVRKSPFDSGGRRHTSFSSAFVYPEVDDDIDIEINPADLRIDVYRASGAGGQHVNRTESAVRITHIPTGIVTQCQNDRSQHKNKDQAMKQMKAKLYELEMQKKNAEKQAMEDNKSDIGWGSQIRSYVLDDSRIKDLRTGVETRNTQAVLDGSLDQFIEASLKAGL</sequence>
<proteinExistence type="inferred from homology"/>
<keyword id="KW-0963">Cytoplasm</keyword>
<keyword id="KW-0488">Methylation</keyword>
<keyword id="KW-0648">Protein biosynthesis</keyword>
<keyword id="KW-1185">Reference proteome</keyword>
<name>RF2_ECO27</name>